<comment type="function">
    <text evidence="1">Catalyzes the transfer of the enolpyruvyl moiety of phosphoenolpyruvate (PEP) to the 5-hydroxyl of shikimate-3-phosphate (S3P) to produce enolpyruvyl shikimate-3-phosphate and inorganic phosphate.</text>
</comment>
<comment type="catalytic activity">
    <reaction evidence="1">
        <text>3-phosphoshikimate + phosphoenolpyruvate = 5-O-(1-carboxyvinyl)-3-phosphoshikimate + phosphate</text>
        <dbReference type="Rhea" id="RHEA:21256"/>
        <dbReference type="ChEBI" id="CHEBI:43474"/>
        <dbReference type="ChEBI" id="CHEBI:57701"/>
        <dbReference type="ChEBI" id="CHEBI:58702"/>
        <dbReference type="ChEBI" id="CHEBI:145989"/>
        <dbReference type="EC" id="2.5.1.19"/>
    </reaction>
    <physiologicalReaction direction="left-to-right" evidence="1">
        <dbReference type="Rhea" id="RHEA:21257"/>
    </physiologicalReaction>
</comment>
<comment type="pathway">
    <text evidence="1">Metabolic intermediate biosynthesis; chorismate biosynthesis.</text>
</comment>
<comment type="subunit">
    <text evidence="1">Monomer.</text>
</comment>
<comment type="subcellular location">
    <subcellularLocation>
        <location evidence="1">Cytoplasm</location>
    </subcellularLocation>
</comment>
<comment type="similarity">
    <text evidence="1">Belongs to the EPSP synthase family.</text>
</comment>
<organism>
    <name type="scientific">Methanocella arvoryzae (strain DSM 22066 / NBRC 105507 / MRE50)</name>
    <dbReference type="NCBI Taxonomy" id="351160"/>
    <lineage>
        <taxon>Archaea</taxon>
        <taxon>Methanobacteriati</taxon>
        <taxon>Methanobacteriota</taxon>
        <taxon>Stenosarchaea group</taxon>
        <taxon>Methanomicrobia</taxon>
        <taxon>Methanocellales</taxon>
        <taxon>Methanocellaceae</taxon>
        <taxon>Methanocella</taxon>
    </lineage>
</organism>
<proteinExistence type="inferred from homology"/>
<name>AROA_METAR</name>
<keyword id="KW-0028">Amino-acid biosynthesis</keyword>
<keyword id="KW-0057">Aromatic amino acid biosynthesis</keyword>
<keyword id="KW-0963">Cytoplasm</keyword>
<keyword id="KW-1185">Reference proteome</keyword>
<keyword id="KW-0808">Transferase</keyword>
<reference key="1">
    <citation type="journal article" date="2006" name="Science">
        <title>Genome of rice cluster I archaea -- the key methane producers in the rice rhizosphere.</title>
        <authorList>
            <person name="Erkel C."/>
            <person name="Kube M."/>
            <person name="Reinhardt R."/>
            <person name="Liesack W."/>
        </authorList>
    </citation>
    <scope>NUCLEOTIDE SEQUENCE [LARGE SCALE GENOMIC DNA]</scope>
    <source>
        <strain>DSM 22066 / NBRC 105507 / MRE50</strain>
    </source>
</reference>
<gene>
    <name evidence="1" type="primary">aroA</name>
    <name type="ordered locus">UNCMA_22510</name>
    <name type="ORF">RCIX508</name>
</gene>
<sequence length="422" mass="44587">MIARISKSDVWGSVDAPPSKSYTHRAIAIGSMGHYAKITGPLLSADTLATVSACRAFGADIRISGDTVEIAGVIGKPRVPEDVIDAKNSGTTLRLCSSIAALAEGATVFTGDSSLRKRPNGPLIKALNDLGAVCYSTRGTGTAPLIIHGVMKGGRISINGSISSQFISSLLISCPFAKNDTTILIEGELKSKPYVEVTLEMLEKAGCRIETNFEEFRIQCCQDYNLGEYRVPGDFSSASYPLAAAAVTGSRVTVGNLFPSKQGDAAILEHLLDMGANVFWDEEMGTVTVEGGRLHGIDIDAGQTPDLVPTLAVLAACAEGTTHINNAEHVRYKETDRLRAMATELRKMGVQIEERQDGLDIEGGRLTGATVDGHDDHRIVMALAVAGLAADGQTTISTAESVDISYPAFFADLGKLGAKVEV</sequence>
<dbReference type="EC" id="2.5.1.19" evidence="1"/>
<dbReference type="EMBL" id="AM114193">
    <property type="protein sequence ID" value="CAJ35934.1"/>
    <property type="molecule type" value="Genomic_DNA"/>
</dbReference>
<dbReference type="RefSeq" id="WP_012036571.1">
    <property type="nucleotide sequence ID" value="NC_009464.1"/>
</dbReference>
<dbReference type="SMR" id="Q0W6Q9"/>
<dbReference type="STRING" id="351160.RCIX508"/>
<dbReference type="GeneID" id="5144826"/>
<dbReference type="KEGG" id="rci:RCIX508"/>
<dbReference type="PATRIC" id="fig|351160.9.peg.2303"/>
<dbReference type="eggNOG" id="arCOG04134">
    <property type="taxonomic scope" value="Archaea"/>
</dbReference>
<dbReference type="OrthoDB" id="43788at2157"/>
<dbReference type="UniPathway" id="UPA00053"/>
<dbReference type="Proteomes" id="UP000000663">
    <property type="component" value="Chromosome"/>
</dbReference>
<dbReference type="GO" id="GO:0005737">
    <property type="term" value="C:cytoplasm"/>
    <property type="evidence" value="ECO:0007669"/>
    <property type="project" value="UniProtKB-SubCell"/>
</dbReference>
<dbReference type="GO" id="GO:0003866">
    <property type="term" value="F:3-phosphoshikimate 1-carboxyvinyltransferase activity"/>
    <property type="evidence" value="ECO:0007669"/>
    <property type="project" value="UniProtKB-UniRule"/>
</dbReference>
<dbReference type="GO" id="GO:0008652">
    <property type="term" value="P:amino acid biosynthetic process"/>
    <property type="evidence" value="ECO:0007669"/>
    <property type="project" value="UniProtKB-KW"/>
</dbReference>
<dbReference type="GO" id="GO:0009073">
    <property type="term" value="P:aromatic amino acid family biosynthetic process"/>
    <property type="evidence" value="ECO:0007669"/>
    <property type="project" value="UniProtKB-KW"/>
</dbReference>
<dbReference type="GO" id="GO:0009423">
    <property type="term" value="P:chorismate biosynthetic process"/>
    <property type="evidence" value="ECO:0007669"/>
    <property type="project" value="UniProtKB-UniRule"/>
</dbReference>
<dbReference type="CDD" id="cd01556">
    <property type="entry name" value="EPSP_synthase"/>
    <property type="match status" value="1"/>
</dbReference>
<dbReference type="FunFam" id="3.65.10.10:FF:000012">
    <property type="entry name" value="Pentafunctional AROM polypeptide"/>
    <property type="match status" value="1"/>
</dbReference>
<dbReference type="Gene3D" id="3.65.10.10">
    <property type="entry name" value="Enolpyruvate transferase domain"/>
    <property type="match status" value="2"/>
</dbReference>
<dbReference type="HAMAP" id="MF_00210">
    <property type="entry name" value="EPSP_synth"/>
    <property type="match status" value="1"/>
</dbReference>
<dbReference type="InterPro" id="IPR001986">
    <property type="entry name" value="Enolpyruvate_Tfrase_dom"/>
</dbReference>
<dbReference type="InterPro" id="IPR036968">
    <property type="entry name" value="Enolpyruvate_Tfrase_sf"/>
</dbReference>
<dbReference type="InterPro" id="IPR006264">
    <property type="entry name" value="EPSP_synthase"/>
</dbReference>
<dbReference type="InterPro" id="IPR023193">
    <property type="entry name" value="EPSP_synthase_CS"/>
</dbReference>
<dbReference type="InterPro" id="IPR013792">
    <property type="entry name" value="RNA3'P_cycl/enolpyr_Trfase_a/b"/>
</dbReference>
<dbReference type="NCBIfam" id="TIGR01356">
    <property type="entry name" value="aroA"/>
    <property type="match status" value="1"/>
</dbReference>
<dbReference type="PANTHER" id="PTHR21090">
    <property type="entry name" value="AROM/DEHYDROQUINATE SYNTHASE"/>
    <property type="match status" value="1"/>
</dbReference>
<dbReference type="PANTHER" id="PTHR21090:SF5">
    <property type="entry name" value="PENTAFUNCTIONAL AROM POLYPEPTIDE"/>
    <property type="match status" value="1"/>
</dbReference>
<dbReference type="Pfam" id="PF00275">
    <property type="entry name" value="EPSP_synthase"/>
    <property type="match status" value="1"/>
</dbReference>
<dbReference type="PIRSF" id="PIRSF000505">
    <property type="entry name" value="EPSPS"/>
    <property type="match status" value="1"/>
</dbReference>
<dbReference type="SUPFAM" id="SSF55205">
    <property type="entry name" value="EPT/RTPC-like"/>
    <property type="match status" value="1"/>
</dbReference>
<dbReference type="PROSITE" id="PS00885">
    <property type="entry name" value="EPSP_SYNTHASE_2"/>
    <property type="match status" value="1"/>
</dbReference>
<accession>Q0W6Q9</accession>
<feature type="chain" id="PRO_1000012504" description="3-phosphoshikimate 1-carboxyvinyltransferase">
    <location>
        <begin position="1"/>
        <end position="422"/>
    </location>
</feature>
<feature type="active site" description="Proton acceptor" evidence="1">
    <location>
        <position position="306"/>
    </location>
</feature>
<feature type="binding site" evidence="1">
    <location>
        <position position="20"/>
    </location>
    <ligand>
        <name>3-phosphoshikimate</name>
        <dbReference type="ChEBI" id="CHEBI:145989"/>
    </ligand>
</feature>
<feature type="binding site" evidence="1">
    <location>
        <position position="20"/>
    </location>
    <ligand>
        <name>phosphoenolpyruvate</name>
        <dbReference type="ChEBI" id="CHEBI:58702"/>
    </ligand>
</feature>
<feature type="binding site" evidence="1">
    <location>
        <position position="21"/>
    </location>
    <ligand>
        <name>3-phosphoshikimate</name>
        <dbReference type="ChEBI" id="CHEBI:145989"/>
    </ligand>
</feature>
<feature type="binding site" evidence="1">
    <location>
        <position position="25"/>
    </location>
    <ligand>
        <name>3-phosphoshikimate</name>
        <dbReference type="ChEBI" id="CHEBI:145989"/>
    </ligand>
</feature>
<feature type="binding site" evidence="1">
    <location>
        <position position="90"/>
    </location>
    <ligand>
        <name>phosphoenolpyruvate</name>
        <dbReference type="ChEBI" id="CHEBI:58702"/>
    </ligand>
</feature>
<feature type="binding site" evidence="1">
    <location>
        <position position="118"/>
    </location>
    <ligand>
        <name>phosphoenolpyruvate</name>
        <dbReference type="ChEBI" id="CHEBI:58702"/>
    </ligand>
</feature>
<feature type="binding site" evidence="1">
    <location>
        <position position="163"/>
    </location>
    <ligand>
        <name>3-phosphoshikimate</name>
        <dbReference type="ChEBI" id="CHEBI:145989"/>
    </ligand>
</feature>
<feature type="binding site" evidence="1">
    <location>
        <position position="164"/>
    </location>
    <ligand>
        <name>3-phosphoshikimate</name>
        <dbReference type="ChEBI" id="CHEBI:145989"/>
    </ligand>
</feature>
<feature type="binding site" evidence="1">
    <location>
        <position position="165"/>
    </location>
    <ligand>
        <name>3-phosphoshikimate</name>
        <dbReference type="ChEBI" id="CHEBI:145989"/>
    </ligand>
</feature>
<feature type="binding site" evidence="1">
    <location>
        <position position="165"/>
    </location>
    <ligand>
        <name>phosphoenolpyruvate</name>
        <dbReference type="ChEBI" id="CHEBI:58702"/>
    </ligand>
</feature>
<feature type="binding site" evidence="1">
    <location>
        <position position="191"/>
    </location>
    <ligand>
        <name>3-phosphoshikimate</name>
        <dbReference type="ChEBI" id="CHEBI:145989"/>
    </ligand>
</feature>
<feature type="binding site" evidence="1">
    <location>
        <position position="306"/>
    </location>
    <ligand>
        <name>3-phosphoshikimate</name>
        <dbReference type="ChEBI" id="CHEBI:145989"/>
    </ligand>
</feature>
<feature type="binding site" evidence="1">
    <location>
        <position position="333"/>
    </location>
    <ligand>
        <name>3-phosphoshikimate</name>
        <dbReference type="ChEBI" id="CHEBI:145989"/>
    </ligand>
</feature>
<feature type="binding site" evidence="1">
    <location>
        <position position="337"/>
    </location>
    <ligand>
        <name>phosphoenolpyruvate</name>
        <dbReference type="ChEBI" id="CHEBI:58702"/>
    </ligand>
</feature>
<feature type="binding site" evidence="1">
    <location>
        <position position="378"/>
    </location>
    <ligand>
        <name>phosphoenolpyruvate</name>
        <dbReference type="ChEBI" id="CHEBI:58702"/>
    </ligand>
</feature>
<protein>
    <recommendedName>
        <fullName evidence="1">3-phosphoshikimate 1-carboxyvinyltransferase</fullName>
        <ecNumber evidence="1">2.5.1.19</ecNumber>
    </recommendedName>
    <alternativeName>
        <fullName evidence="1">5-enolpyruvylshikimate-3-phosphate synthase</fullName>
        <shortName evidence="1">EPSP synthase</shortName>
        <shortName evidence="1">EPSPS</shortName>
    </alternativeName>
</protein>
<evidence type="ECO:0000255" key="1">
    <source>
        <dbReference type="HAMAP-Rule" id="MF_00210"/>
    </source>
</evidence>